<accession>Q9LMJ4</accession>
<accession>Q56YJ9</accession>
<gene>
    <name evidence="11" type="primary">EXO70B2</name>
    <name evidence="13" type="ordered locus">At1g07000</name>
    <name evidence="14" type="ORF">F10K1.28</name>
</gene>
<dbReference type="EMBL" id="AC067971">
    <property type="protein sequence ID" value="AAF82219.1"/>
    <property type="molecule type" value="Genomic_DNA"/>
</dbReference>
<dbReference type="EMBL" id="CP002684">
    <property type="protein sequence ID" value="AEE28064.1"/>
    <property type="molecule type" value="Genomic_DNA"/>
</dbReference>
<dbReference type="EMBL" id="AY075660">
    <property type="protein sequence ID" value="AAL77667.1"/>
    <property type="molecule type" value="mRNA"/>
</dbReference>
<dbReference type="EMBL" id="AY101526">
    <property type="protein sequence ID" value="AAM26647.1"/>
    <property type="molecule type" value="mRNA"/>
</dbReference>
<dbReference type="EMBL" id="AK221323">
    <property type="protein sequence ID" value="BAD94116.1"/>
    <property type="molecule type" value="mRNA"/>
</dbReference>
<dbReference type="PIR" id="G86204">
    <property type="entry name" value="G86204"/>
</dbReference>
<dbReference type="RefSeq" id="NP_172181.1">
    <property type="nucleotide sequence ID" value="NM_100573.4"/>
</dbReference>
<dbReference type="SMR" id="Q9LMJ4"/>
<dbReference type="FunCoup" id="Q9LMJ4">
    <property type="interactions" value="3355"/>
</dbReference>
<dbReference type="IntAct" id="Q9LMJ4">
    <property type="interactions" value="5"/>
</dbReference>
<dbReference type="STRING" id="3702.Q9LMJ4"/>
<dbReference type="GlyGen" id="Q9LMJ4">
    <property type="glycosylation" value="1 site"/>
</dbReference>
<dbReference type="iPTMnet" id="Q9LMJ4"/>
<dbReference type="PaxDb" id="3702-AT1G07000.1"/>
<dbReference type="ProteomicsDB" id="222037"/>
<dbReference type="EnsemblPlants" id="AT1G07000.1">
    <property type="protein sequence ID" value="AT1G07000.1"/>
    <property type="gene ID" value="AT1G07000"/>
</dbReference>
<dbReference type="GeneID" id="837210"/>
<dbReference type="Gramene" id="AT1G07000.1">
    <property type="protein sequence ID" value="AT1G07000.1"/>
    <property type="gene ID" value="AT1G07000"/>
</dbReference>
<dbReference type="KEGG" id="ath:AT1G07000"/>
<dbReference type="Araport" id="AT1G07000"/>
<dbReference type="TAIR" id="AT1G07000">
    <property type="gene designation" value="EXO70B2"/>
</dbReference>
<dbReference type="eggNOG" id="KOG2344">
    <property type="taxonomic scope" value="Eukaryota"/>
</dbReference>
<dbReference type="HOGENOM" id="CLU_010236_2_1_1"/>
<dbReference type="InParanoid" id="Q9LMJ4"/>
<dbReference type="OMA" id="SWNQVVG"/>
<dbReference type="PhylomeDB" id="Q9LMJ4"/>
<dbReference type="PRO" id="PR:Q9LMJ4"/>
<dbReference type="Proteomes" id="UP000006548">
    <property type="component" value="Chromosome 1"/>
</dbReference>
<dbReference type="ExpressionAtlas" id="Q9LMJ4">
    <property type="expression patterns" value="baseline and differential"/>
</dbReference>
<dbReference type="GO" id="GO:0005737">
    <property type="term" value="C:cytoplasm"/>
    <property type="evidence" value="ECO:0000314"/>
    <property type="project" value="UniProtKB"/>
</dbReference>
<dbReference type="GO" id="GO:0005829">
    <property type="term" value="C:cytosol"/>
    <property type="evidence" value="ECO:0000314"/>
    <property type="project" value="TAIR"/>
</dbReference>
<dbReference type="GO" id="GO:0000145">
    <property type="term" value="C:exocyst"/>
    <property type="evidence" value="ECO:0007669"/>
    <property type="project" value="InterPro"/>
</dbReference>
<dbReference type="GO" id="GO:0070062">
    <property type="term" value="C:extracellular exosome"/>
    <property type="evidence" value="ECO:0000314"/>
    <property type="project" value="TAIR"/>
</dbReference>
<dbReference type="GO" id="GO:0005634">
    <property type="term" value="C:nucleus"/>
    <property type="evidence" value="ECO:0000314"/>
    <property type="project" value="UniProtKB"/>
</dbReference>
<dbReference type="GO" id="GO:0045335">
    <property type="term" value="C:phagocytic vesicle"/>
    <property type="evidence" value="ECO:0007669"/>
    <property type="project" value="UniProtKB-SubCell"/>
</dbReference>
<dbReference type="GO" id="GO:0005886">
    <property type="term" value="C:plasma membrane"/>
    <property type="evidence" value="ECO:0007005"/>
    <property type="project" value="TAIR"/>
</dbReference>
<dbReference type="GO" id="GO:0005546">
    <property type="term" value="F:phosphatidylinositol-4,5-bisphosphate binding"/>
    <property type="evidence" value="ECO:0007669"/>
    <property type="project" value="InterPro"/>
</dbReference>
<dbReference type="GO" id="GO:0042545">
    <property type="term" value="P:cell wall modification"/>
    <property type="evidence" value="ECO:0000315"/>
    <property type="project" value="UniProtKB"/>
</dbReference>
<dbReference type="GO" id="GO:0006952">
    <property type="term" value="P:defense response"/>
    <property type="evidence" value="ECO:0007669"/>
    <property type="project" value="UniProtKB-KW"/>
</dbReference>
<dbReference type="GO" id="GO:0006887">
    <property type="term" value="P:exocytosis"/>
    <property type="evidence" value="ECO:0007669"/>
    <property type="project" value="InterPro"/>
</dbReference>
<dbReference type="GO" id="GO:1900426">
    <property type="term" value="P:positive regulation of defense response to bacterium"/>
    <property type="evidence" value="ECO:0000315"/>
    <property type="project" value="UniProtKB"/>
</dbReference>
<dbReference type="GO" id="GO:1902290">
    <property type="term" value="P:positive regulation of defense response to oomycetes"/>
    <property type="evidence" value="ECO:0000315"/>
    <property type="project" value="UniProtKB"/>
</dbReference>
<dbReference type="GO" id="GO:1900150">
    <property type="term" value="P:regulation of defense response to fungus"/>
    <property type="evidence" value="ECO:0000315"/>
    <property type="project" value="UniProtKB"/>
</dbReference>
<dbReference type="GO" id="GO:0090333">
    <property type="term" value="P:regulation of stomatal closure"/>
    <property type="evidence" value="ECO:0000315"/>
    <property type="project" value="UniProtKB"/>
</dbReference>
<dbReference type="GO" id="GO:0009617">
    <property type="term" value="P:response to bacterium"/>
    <property type="evidence" value="ECO:0000304"/>
    <property type="project" value="UniProtKB"/>
</dbReference>
<dbReference type="GO" id="GO:0009620">
    <property type="term" value="P:response to fungus"/>
    <property type="evidence" value="ECO:0000304"/>
    <property type="project" value="UniProtKB"/>
</dbReference>
<dbReference type="GO" id="GO:0002237">
    <property type="term" value="P:response to molecule of bacterial origin"/>
    <property type="evidence" value="ECO:0000315"/>
    <property type="project" value="UniProtKB"/>
</dbReference>
<dbReference type="GO" id="GO:0002238">
    <property type="term" value="P:response to molecule of fungal origin"/>
    <property type="evidence" value="ECO:0000315"/>
    <property type="project" value="UniProtKB"/>
</dbReference>
<dbReference type="GO" id="GO:0009414">
    <property type="term" value="P:response to water deprivation"/>
    <property type="evidence" value="ECO:0000315"/>
    <property type="project" value="UniProtKB"/>
</dbReference>
<dbReference type="FunFam" id="1.20.1280.170:FF:000003">
    <property type="entry name" value="Exocyst subunit Exo70 family protein"/>
    <property type="match status" value="1"/>
</dbReference>
<dbReference type="Gene3D" id="1.20.1280.170">
    <property type="entry name" value="Exocyst complex component Exo70"/>
    <property type="match status" value="1"/>
</dbReference>
<dbReference type="InterPro" id="IPR016159">
    <property type="entry name" value="Cullin_repeat-like_dom_sf"/>
</dbReference>
<dbReference type="InterPro" id="IPR004140">
    <property type="entry name" value="Exo70"/>
</dbReference>
<dbReference type="InterPro" id="IPR046364">
    <property type="entry name" value="Exo70_C"/>
</dbReference>
<dbReference type="PANTHER" id="PTHR12542:SF103">
    <property type="entry name" value="EXOCYST COMPLEX COMPONENT EXO70B2"/>
    <property type="match status" value="1"/>
</dbReference>
<dbReference type="PANTHER" id="PTHR12542">
    <property type="entry name" value="EXOCYST COMPLEX PROTEIN EXO70"/>
    <property type="match status" value="1"/>
</dbReference>
<dbReference type="Pfam" id="PF03081">
    <property type="entry name" value="Exo70_C"/>
    <property type="match status" value="1"/>
</dbReference>
<dbReference type="Pfam" id="PF20669">
    <property type="entry name" value="Exo70_N"/>
    <property type="match status" value="1"/>
</dbReference>
<dbReference type="SUPFAM" id="SSF74788">
    <property type="entry name" value="Cullin repeat-like"/>
    <property type="match status" value="1"/>
</dbReference>
<organism>
    <name type="scientific">Arabidopsis thaliana</name>
    <name type="common">Mouse-ear cress</name>
    <dbReference type="NCBI Taxonomy" id="3702"/>
    <lineage>
        <taxon>Eukaryota</taxon>
        <taxon>Viridiplantae</taxon>
        <taxon>Streptophyta</taxon>
        <taxon>Embryophyta</taxon>
        <taxon>Tracheophyta</taxon>
        <taxon>Spermatophyta</taxon>
        <taxon>Magnoliopsida</taxon>
        <taxon>eudicotyledons</taxon>
        <taxon>Gunneridae</taxon>
        <taxon>Pentapetalae</taxon>
        <taxon>rosids</taxon>
        <taxon>malvids</taxon>
        <taxon>Brassicales</taxon>
        <taxon>Brassicaceae</taxon>
        <taxon>Camelineae</taxon>
        <taxon>Arabidopsis</taxon>
    </lineage>
</organism>
<evidence type="ECO:0000250" key="1">
    <source>
        <dbReference type="UniProtKB" id="Q9FGH9"/>
    </source>
</evidence>
<evidence type="ECO:0000256" key="2">
    <source>
        <dbReference type="SAM" id="MobiDB-lite"/>
    </source>
</evidence>
<evidence type="ECO:0000269" key="3">
    <source>
    </source>
</evidence>
<evidence type="ECO:0000269" key="4">
    <source>
    </source>
</evidence>
<evidence type="ECO:0000269" key="5">
    <source>
    </source>
</evidence>
<evidence type="ECO:0000269" key="6">
    <source>
    </source>
</evidence>
<evidence type="ECO:0000269" key="7">
    <source>
    </source>
</evidence>
<evidence type="ECO:0000269" key="8">
    <source>
    </source>
</evidence>
<evidence type="ECO:0000269" key="9">
    <source>
    </source>
</evidence>
<evidence type="ECO:0000269" key="10">
    <source>
    </source>
</evidence>
<evidence type="ECO:0000303" key="11">
    <source>
    </source>
</evidence>
<evidence type="ECO:0000305" key="12"/>
<evidence type="ECO:0000312" key="13">
    <source>
        <dbReference type="Araport" id="AT1G07000"/>
    </source>
</evidence>
<evidence type="ECO:0000312" key="14">
    <source>
        <dbReference type="EMBL" id="AAF82219.1"/>
    </source>
</evidence>
<proteinExistence type="evidence at protein level"/>
<name>E70B2_ARATH</name>
<comment type="function">
    <text evidence="1 7 8 10">Component of an exocyst subcomplex specifically involved in autophagy-related, Golgi-independent membrane traffic to the vacuole. Regulates autophagosome formation and autophagy-related Golgi-independent import into the vacuole (By similarity). Positive regulator of defense responses to pathogenic bacteria (e.g. P.syringae pv. maculicola), to the biotrophic oomycete H.arabidopsidis and to fungi (e.g. B.graminis hordei), especially in cell wall apposition formation related to plant defense (PubMed:21199889, PubMed:23170036). Required for both immediate and later responses triggered by pathogen-associated molecular patterns (PAMPs) (PubMed:23170036). Positive regulator of abscisic acid (ABA)-independent mannitol (drought)-promoted stomatal closure (PubMed:27956469).</text>
</comment>
<comment type="subunit">
    <text evidence="7 8 9 12">Self interacts (PubMed:21199889). Interacts with EXO70B1 (PubMed:23944713). Interacts with the exocyst subunits EXO70H1, SEC5A and SEC15B. Binds to SNAP33 (PubMed:21199889). Subunit of the exocyst complex that mediates vesicle tethering during exocytosis (Probable). Binds to PUB22 (PubMed:23170036).</text>
</comment>
<comment type="subcellular location">
    <subcellularLocation>
        <location evidence="1">Cytoplasmic vesicle</location>
        <location evidence="1">Phagosome</location>
    </subcellularLocation>
    <subcellularLocation>
        <location evidence="4 6 7">Cytoplasm</location>
    </subcellularLocation>
    <subcellularLocation>
        <location evidence="4 7">Nucleus</location>
    </subcellularLocation>
    <text evidence="7">In the cytoplasm, localized in a peri-nuclear pattern.</text>
</comment>
<comment type="tissue specificity">
    <text evidence="5">Mostly expressed in leaves and, to a lower extent, in roots, cotyledons, internodes, flower buds, siliques and anthers.</text>
</comment>
<comment type="induction">
    <text evidence="7">Induced by elicitor peptides elf18 and flg22, by the fungus B.graminis hordei and by the bacterium P.syringae.</text>
</comment>
<comment type="PTM">
    <text evidence="8">Target of the E3 ubiquitin-protein ligase PUB22 that mediates its ubiquitination and degradation via the 26S proteasome to attenuate pathogen-associated molecular patterns (PAMP)-induced signaling, especially is response to the bacterial elicitor flg22.</text>
</comment>
<comment type="disruption phenotype">
    <text evidence="3 7 8 10">No discernible phenotype in normal conditions (PubMed:16942608, PubMed:21199889, PubMed:27956469). Altered mannitol (drought)-promoted stomatal closure (PubMed:27956469). Enhanced susceptibility to the bacterial pathogen P.syringae pv. maculicola and abnormal papilla formation, with an unusual wide halo made of vesicle-like structures upon inoculation by the fungal pathogen B.graminis hordei (PubMed:21199889). Reduced sensitivity to pathogen-associated molecular patterns (PAMPs) (e.g. bacterial elicitor flg22, bacterial transcription factor elf18, Pep1 and fungal chitin) leading to a reduced production of reactive oxygen species (ROS) and impaired induction of several plant defense genes. Increased disease susceptibility to the biotrophic oomycete H.arabidopsidis (PubMed:23170036).</text>
</comment>
<comment type="similarity">
    <text evidence="12">Belongs to the EXO70 family.</text>
</comment>
<sequence>MAEAGDENLYAAARDIARALGKDPSAAGDILQILSGYGASGNRGGDPRPTPSRGGSNVNFDRALTSLERQISSYIVEDRPIWSDPVDSRTFLDSVDELLAIAGDLRSMAGDKSVAVCQSRADELIQQVMFRLQEEFGFVMDRAPDSFDSDDEFPGEEDNDTSDGVIVARPITDYKIVIEALQSSVIGDLNAIAVRMVAGGFAKECSRVYSSRRREFLEESLSRLHLRGLSMEEVQESPWQDLEDEIDRWIKAVTLIFHVFFPSERLLCDRVFSDLPVSSVTDLSFMEVCRGTTTQLLNFADAIALGSRLPERLFKVVDLYEAMQDLIPKMETLFSDRYCSPLRHEALAIHKRLGEAIRGIFMELENLIRRDPPKTAFPGGGIHPITRYVMNYLRAACKSRQSLEQILDQTGNETGSDTRPLSVQIIWVLELLESNLEGKKRTYRDPSLCFLFMMNNDKYILDKAKDNELGLVLGEDWIVKHAAKLRQYHSNYRRSSWNQVVGLLRTDGPYPKLVENLRLFKSQFDEVCKVQSQWVVSDGQLREELRSSVAGIVSPAYSNFIRRLKESPEINGRRGEPFIPYTVEDVEFIIKRLFKESSS</sequence>
<feature type="chain" id="PRO_0000440703" description="Exocyst complex component EXO70B2">
    <location>
        <begin position="1"/>
        <end position="599"/>
    </location>
</feature>
<feature type="region of interest" description="Disordered" evidence="2">
    <location>
        <begin position="38"/>
        <end position="58"/>
    </location>
</feature>
<feature type="sequence conflict" description="In Ref. 4; BAD94116." evidence="12" ref="4">
    <original>D</original>
    <variation>G</variation>
    <location>
        <position position="417"/>
    </location>
</feature>
<reference key="1">
    <citation type="journal article" date="2000" name="Nature">
        <title>Sequence and analysis of chromosome 1 of the plant Arabidopsis thaliana.</title>
        <authorList>
            <person name="Theologis A."/>
            <person name="Ecker J.R."/>
            <person name="Palm C.J."/>
            <person name="Federspiel N.A."/>
            <person name="Kaul S."/>
            <person name="White O."/>
            <person name="Alonso J."/>
            <person name="Altafi H."/>
            <person name="Araujo R."/>
            <person name="Bowman C.L."/>
            <person name="Brooks S.Y."/>
            <person name="Buehler E."/>
            <person name="Chan A."/>
            <person name="Chao Q."/>
            <person name="Chen H."/>
            <person name="Cheuk R.F."/>
            <person name="Chin C.W."/>
            <person name="Chung M.K."/>
            <person name="Conn L."/>
            <person name="Conway A.B."/>
            <person name="Conway A.R."/>
            <person name="Creasy T.H."/>
            <person name="Dewar K."/>
            <person name="Dunn P."/>
            <person name="Etgu P."/>
            <person name="Feldblyum T.V."/>
            <person name="Feng J.-D."/>
            <person name="Fong B."/>
            <person name="Fujii C.Y."/>
            <person name="Gill J.E."/>
            <person name="Goldsmith A.D."/>
            <person name="Haas B."/>
            <person name="Hansen N.F."/>
            <person name="Hughes B."/>
            <person name="Huizar L."/>
            <person name="Hunter J.L."/>
            <person name="Jenkins J."/>
            <person name="Johnson-Hopson C."/>
            <person name="Khan S."/>
            <person name="Khaykin E."/>
            <person name="Kim C.J."/>
            <person name="Koo H.L."/>
            <person name="Kremenetskaia I."/>
            <person name="Kurtz D.B."/>
            <person name="Kwan A."/>
            <person name="Lam B."/>
            <person name="Langin-Hooper S."/>
            <person name="Lee A."/>
            <person name="Lee J.M."/>
            <person name="Lenz C.A."/>
            <person name="Li J.H."/>
            <person name="Li Y.-P."/>
            <person name="Lin X."/>
            <person name="Liu S.X."/>
            <person name="Liu Z.A."/>
            <person name="Luros J.S."/>
            <person name="Maiti R."/>
            <person name="Marziali A."/>
            <person name="Militscher J."/>
            <person name="Miranda M."/>
            <person name="Nguyen M."/>
            <person name="Nierman W.C."/>
            <person name="Osborne B.I."/>
            <person name="Pai G."/>
            <person name="Peterson J."/>
            <person name="Pham P.K."/>
            <person name="Rizzo M."/>
            <person name="Rooney T."/>
            <person name="Rowley D."/>
            <person name="Sakano H."/>
            <person name="Salzberg S.L."/>
            <person name="Schwartz J.R."/>
            <person name="Shinn P."/>
            <person name="Southwick A.M."/>
            <person name="Sun H."/>
            <person name="Tallon L.J."/>
            <person name="Tambunga G."/>
            <person name="Toriumi M.J."/>
            <person name="Town C.D."/>
            <person name="Utterback T."/>
            <person name="Van Aken S."/>
            <person name="Vaysberg M."/>
            <person name="Vysotskaia V.S."/>
            <person name="Walker M."/>
            <person name="Wu D."/>
            <person name="Yu G."/>
            <person name="Fraser C.M."/>
            <person name="Venter J.C."/>
            <person name="Davis R.W."/>
        </authorList>
    </citation>
    <scope>NUCLEOTIDE SEQUENCE [LARGE SCALE GENOMIC DNA]</scope>
    <source>
        <strain>cv. Columbia</strain>
    </source>
</reference>
<reference key="2">
    <citation type="journal article" date="2017" name="Plant J.">
        <title>Araport11: a complete reannotation of the Arabidopsis thaliana reference genome.</title>
        <authorList>
            <person name="Cheng C.Y."/>
            <person name="Krishnakumar V."/>
            <person name="Chan A.P."/>
            <person name="Thibaud-Nissen F."/>
            <person name="Schobel S."/>
            <person name="Town C.D."/>
        </authorList>
    </citation>
    <scope>GENOME REANNOTATION</scope>
    <source>
        <strain>cv. Columbia</strain>
    </source>
</reference>
<reference key="3">
    <citation type="journal article" date="2003" name="Science">
        <title>Empirical analysis of transcriptional activity in the Arabidopsis genome.</title>
        <authorList>
            <person name="Yamada K."/>
            <person name="Lim J."/>
            <person name="Dale J.M."/>
            <person name="Chen H."/>
            <person name="Shinn P."/>
            <person name="Palm C.J."/>
            <person name="Southwick A.M."/>
            <person name="Wu H.C."/>
            <person name="Kim C.J."/>
            <person name="Nguyen M."/>
            <person name="Pham P.K."/>
            <person name="Cheuk R.F."/>
            <person name="Karlin-Newmann G."/>
            <person name="Liu S.X."/>
            <person name="Lam B."/>
            <person name="Sakano H."/>
            <person name="Wu T."/>
            <person name="Yu G."/>
            <person name="Miranda M."/>
            <person name="Quach H.L."/>
            <person name="Tripp M."/>
            <person name="Chang C.H."/>
            <person name="Lee J.M."/>
            <person name="Toriumi M.J."/>
            <person name="Chan M.M."/>
            <person name="Tang C.C."/>
            <person name="Onodera C.S."/>
            <person name="Deng J.M."/>
            <person name="Akiyama K."/>
            <person name="Ansari Y."/>
            <person name="Arakawa T."/>
            <person name="Banh J."/>
            <person name="Banno F."/>
            <person name="Bowser L."/>
            <person name="Brooks S.Y."/>
            <person name="Carninci P."/>
            <person name="Chao Q."/>
            <person name="Choy N."/>
            <person name="Enju A."/>
            <person name="Goldsmith A.D."/>
            <person name="Gurjal M."/>
            <person name="Hansen N.F."/>
            <person name="Hayashizaki Y."/>
            <person name="Johnson-Hopson C."/>
            <person name="Hsuan V.W."/>
            <person name="Iida K."/>
            <person name="Karnes M."/>
            <person name="Khan S."/>
            <person name="Koesema E."/>
            <person name="Ishida J."/>
            <person name="Jiang P.X."/>
            <person name="Jones T."/>
            <person name="Kawai J."/>
            <person name="Kamiya A."/>
            <person name="Meyers C."/>
            <person name="Nakajima M."/>
            <person name="Narusaka M."/>
            <person name="Seki M."/>
            <person name="Sakurai T."/>
            <person name="Satou M."/>
            <person name="Tamse R."/>
            <person name="Vaysberg M."/>
            <person name="Wallender E.K."/>
            <person name="Wong C."/>
            <person name="Yamamura Y."/>
            <person name="Yuan S."/>
            <person name="Shinozaki K."/>
            <person name="Davis R.W."/>
            <person name="Theologis A."/>
            <person name="Ecker J.R."/>
        </authorList>
    </citation>
    <scope>NUCLEOTIDE SEQUENCE [LARGE SCALE MRNA]</scope>
    <source>
        <strain>cv. Columbia</strain>
    </source>
</reference>
<reference key="4">
    <citation type="submission" date="2005-03" db="EMBL/GenBank/DDBJ databases">
        <title>Large-scale analysis of RIKEN Arabidopsis full-length (RAFL) cDNAs.</title>
        <authorList>
            <person name="Totoki Y."/>
            <person name="Seki M."/>
            <person name="Ishida J."/>
            <person name="Nakajima M."/>
            <person name="Enju A."/>
            <person name="Kamiya A."/>
            <person name="Narusaka M."/>
            <person name="Shin-i T."/>
            <person name="Nakagawa M."/>
            <person name="Sakamoto N."/>
            <person name="Oishi K."/>
            <person name="Kohara Y."/>
            <person name="Kobayashi M."/>
            <person name="Toyoda A."/>
            <person name="Sakaki Y."/>
            <person name="Sakurai T."/>
            <person name="Iida K."/>
            <person name="Akiyama K."/>
            <person name="Satou M."/>
            <person name="Toyoda T."/>
            <person name="Konagaya A."/>
            <person name="Carninci P."/>
            <person name="Kawai J."/>
            <person name="Hayashizaki Y."/>
            <person name="Shinozaki K."/>
        </authorList>
    </citation>
    <scope>NUCLEOTIDE SEQUENCE [LARGE SCALE MRNA] OF 403-599</scope>
    <source>
        <strain>cv. Columbia</strain>
    </source>
</reference>
<reference key="5">
    <citation type="journal article" date="2006" name="Plant J.">
        <title>AtEXO70A1, a member of a family of putative exocyst subunits specifically expanded in land plants, is important for polar growth and plant development.</title>
        <authorList>
            <person name="Synek L."/>
            <person name="Schlager N."/>
            <person name="Elias M."/>
            <person name="Quentin M."/>
            <person name="Hauser M.-T."/>
            <person name="Zarsky V."/>
        </authorList>
    </citation>
    <scope>GENE FAMILY</scope>
    <scope>NOMENCLATURE</scope>
    <source>
        <strain>cv. Columbia</strain>
    </source>
</reference>
<reference key="6">
    <citation type="journal article" date="2010" name="New Phytol.">
        <title>Characterization of the Arabidopsis thaliana exocyst complex gene families by phylogenetic, expression profiling, and subcellular localization studies.</title>
        <authorList>
            <person name="Chong Y.T."/>
            <person name="Gidda S.K."/>
            <person name="Sanford C."/>
            <person name="Parkinson J."/>
            <person name="Mullen R.T."/>
            <person name="Goring D.R."/>
        </authorList>
    </citation>
    <scope>SUBCELLULAR LOCATION</scope>
    <source>
        <strain>cv. Columbia</strain>
    </source>
</reference>
<reference key="7">
    <citation type="journal article" date="2010" name="Plant Cell">
        <title>EXPO, an exocyst-positive organelle distinct from multivesicular endosomes and autophagosomes, mediates cytosol to cell wall exocytosis in Arabidopsis and tobacco cells.</title>
        <authorList>
            <person name="Wang J."/>
            <person name="Ding Y."/>
            <person name="Wang J."/>
            <person name="Hillmer S."/>
            <person name="Miao Y."/>
            <person name="Lo S.W."/>
            <person name="Wang X."/>
            <person name="Robinson D.G."/>
            <person name="Jiang L."/>
        </authorList>
    </citation>
    <scope>SUBCELLULAR LOCATION</scope>
</reference>
<reference key="8">
    <citation type="journal article" date="2010" name="Plant Physiol.">
        <title>Expression and functional analyses of EXO70 genes in Arabidopsis implicate their roles in regulating cell type-specific exocytosis.</title>
        <authorList>
            <person name="Li S."/>
            <person name="van Os G.M.A."/>
            <person name="Ren S."/>
            <person name="Yu D."/>
            <person name="Ketelaar T."/>
            <person name="Emons A.M.C."/>
            <person name="Liu C.-M."/>
        </authorList>
    </citation>
    <scope>TISSUE SPECIFICITY</scope>
    <source>
        <strain>cv. Columbia</strain>
    </source>
</reference>
<reference key="9">
    <citation type="journal article" date="2011" name="J. Exp. Bot.">
        <title>The role for the exocyst complex subunits Exo70B2 and Exo70H1 in the plant-pathogen interaction.</title>
        <authorList>
            <person name="Pecenkova T."/>
            <person name="Hala M."/>
            <person name="Kulich I."/>
            <person name="Kocourkova D."/>
            <person name="Drdova E."/>
            <person name="Fendrych M."/>
            <person name="Toupalova H."/>
            <person name="Zarsky V."/>
        </authorList>
    </citation>
    <scope>FUNCTION</scope>
    <scope>DISRUPTION PHENOTYPE</scope>
    <scope>INDUCTION BY B.GRAMINIS AND P.SYRINGAE</scope>
    <scope>SUBCELLULAR LOCATION</scope>
    <scope>SUBUNIT</scope>
    <scope>INTERACTION WITH SEC5A; SEC15B; EXO70H1 AND SNAP33</scope>
    <source>
        <strain>cv. Columbia</strain>
    </source>
</reference>
<reference key="10">
    <citation type="journal article" date="2012" name="Plant Cell">
        <title>The ubiquitin ligase PUB22 targets a subunit of the exocyst complex required for PAMP-triggered responses in Arabidopsis.</title>
        <authorList>
            <person name="Stegmann M."/>
            <person name="Anderson R.G."/>
            <person name="Ichimura K."/>
            <person name="Pecenkova T."/>
            <person name="Reuter P."/>
            <person name="Zarsky V."/>
            <person name="McDowell J.M."/>
            <person name="Shirasu K."/>
            <person name="Trujillo M."/>
        </authorList>
    </citation>
    <scope>FUNCTION</scope>
    <scope>DISRUPTION PHENOTYPE</scope>
    <scope>REGULATION BY PUB22</scope>
    <scope>INTERACTION WITH PUB22</scope>
    <source>
        <strain>cv. Columbia</strain>
    </source>
</reference>
<reference key="11">
    <citation type="journal article" date="2013" name="Traffic">
        <title>Arabidopsis exocyst subcomplex containing subunit EXO70B1 is involved in the autophagy-related transport to the vacuole.</title>
        <authorList>
            <person name="Kulich I."/>
            <person name="Pecenkova T."/>
            <person name="Sekeres J."/>
            <person name="Smetana O."/>
            <person name="Fendrych M."/>
            <person name="Foissner I."/>
            <person name="Hoeftberger M."/>
            <person name="Zarsky V."/>
        </authorList>
    </citation>
    <scope>INTERACTION WITH EXO70B1</scope>
    <source>
        <strain>cv. Columbia</strain>
    </source>
</reference>
<reference key="12">
    <citation type="journal article" date="2016" name="Plant Cell">
        <title>The N-terminal UND motif of the Arabidopsis U-box E3 ligase PUB18 is critical for the negative regulation of ABA-mediated stomatal movement and determines its ubiquitination specificity for exocyst subunit Exo70B1.</title>
        <authorList>
            <person name="Seo D.H."/>
            <person name="Ahn M.Y."/>
            <person name="Park K.Y."/>
            <person name="Kim E.Y."/>
            <person name="Kim W.T."/>
        </authorList>
    </citation>
    <scope>FUNCTION</scope>
    <scope>DISRUPTION PHENOTYPE</scope>
    <source>
        <strain>cv. Columbia</strain>
    </source>
</reference>
<protein>
    <recommendedName>
        <fullName evidence="11">Exocyst complex component EXO70B2</fullName>
        <shortName evidence="11">AtExo70b2</shortName>
    </recommendedName>
    <alternativeName>
        <fullName evidence="11">Exocyst subunit Exo70 family protein B2</fullName>
    </alternativeName>
</protein>
<keyword id="KW-0963">Cytoplasm</keyword>
<keyword id="KW-0968">Cytoplasmic vesicle</keyword>
<keyword id="KW-0539">Nucleus</keyword>
<keyword id="KW-0611">Plant defense</keyword>
<keyword id="KW-1185">Reference proteome</keyword>
<keyword id="KW-0813">Transport</keyword>
<keyword id="KW-0832">Ubl conjugation</keyword>